<organism>
    <name type="scientific">Salmonella typhimurium (strain LT2 / SGSC1412 / ATCC 700720)</name>
    <dbReference type="NCBI Taxonomy" id="99287"/>
    <lineage>
        <taxon>Bacteria</taxon>
        <taxon>Pseudomonadati</taxon>
        <taxon>Pseudomonadota</taxon>
        <taxon>Gammaproteobacteria</taxon>
        <taxon>Enterobacterales</taxon>
        <taxon>Enterobacteriaceae</taxon>
        <taxon>Salmonella</taxon>
    </lineage>
</organism>
<dbReference type="EC" id="2.7.7.4" evidence="2"/>
<dbReference type="EMBL" id="AE006468">
    <property type="protein sequence ID" value="AAL21814.1"/>
    <property type="molecule type" value="Genomic_DNA"/>
</dbReference>
<dbReference type="RefSeq" id="NP_461855.1">
    <property type="nucleotide sequence ID" value="NC_003197.2"/>
</dbReference>
<dbReference type="RefSeq" id="WP_001092263.1">
    <property type="nucleotide sequence ID" value="NC_003197.2"/>
</dbReference>
<dbReference type="SMR" id="Q8ZMF5"/>
<dbReference type="STRING" id="99287.STM2934"/>
<dbReference type="PaxDb" id="99287-STM2934"/>
<dbReference type="GeneID" id="1254457"/>
<dbReference type="KEGG" id="stm:STM2934"/>
<dbReference type="PATRIC" id="fig|99287.12.peg.3088"/>
<dbReference type="HOGENOM" id="CLU_007265_5_2_6"/>
<dbReference type="OMA" id="MDLIGWD"/>
<dbReference type="PhylomeDB" id="Q8ZMF5"/>
<dbReference type="BioCyc" id="SENT99287:STM2934-MONOMER"/>
<dbReference type="UniPathway" id="UPA00140">
    <property type="reaction ID" value="UER00204"/>
</dbReference>
<dbReference type="Proteomes" id="UP000001014">
    <property type="component" value="Chromosome"/>
</dbReference>
<dbReference type="GO" id="GO:0005524">
    <property type="term" value="F:ATP binding"/>
    <property type="evidence" value="ECO:0007669"/>
    <property type="project" value="UniProtKB-KW"/>
</dbReference>
<dbReference type="GO" id="GO:0005525">
    <property type="term" value="F:GTP binding"/>
    <property type="evidence" value="ECO:0007669"/>
    <property type="project" value="UniProtKB-UniRule"/>
</dbReference>
<dbReference type="GO" id="GO:0003924">
    <property type="term" value="F:GTPase activity"/>
    <property type="evidence" value="ECO:0007669"/>
    <property type="project" value="InterPro"/>
</dbReference>
<dbReference type="GO" id="GO:0004781">
    <property type="term" value="F:sulfate adenylyltransferase (ATP) activity"/>
    <property type="evidence" value="ECO:0007669"/>
    <property type="project" value="UniProtKB-UniRule"/>
</dbReference>
<dbReference type="GO" id="GO:0070814">
    <property type="term" value="P:hydrogen sulfide biosynthetic process"/>
    <property type="evidence" value="ECO:0007669"/>
    <property type="project" value="UniProtKB-UniRule"/>
</dbReference>
<dbReference type="GO" id="GO:0000103">
    <property type="term" value="P:sulfate assimilation"/>
    <property type="evidence" value="ECO:0007669"/>
    <property type="project" value="UniProtKB-UniRule"/>
</dbReference>
<dbReference type="GO" id="GO:0006790">
    <property type="term" value="P:sulfur compound metabolic process"/>
    <property type="evidence" value="ECO:0000318"/>
    <property type="project" value="GO_Central"/>
</dbReference>
<dbReference type="CDD" id="cd04166">
    <property type="entry name" value="CysN_ATPS"/>
    <property type="match status" value="1"/>
</dbReference>
<dbReference type="CDD" id="cd03695">
    <property type="entry name" value="CysN_NodQ_II"/>
    <property type="match status" value="1"/>
</dbReference>
<dbReference type="CDD" id="cd04095">
    <property type="entry name" value="CysN_NoDQ_III"/>
    <property type="match status" value="1"/>
</dbReference>
<dbReference type="FunFam" id="2.40.30.10:FF:000027">
    <property type="entry name" value="Sulfate adenylyltransferase subunit 1"/>
    <property type="match status" value="1"/>
</dbReference>
<dbReference type="FunFam" id="2.40.30.10:FF:000031">
    <property type="entry name" value="Sulfate adenylyltransferase subunit 1"/>
    <property type="match status" value="1"/>
</dbReference>
<dbReference type="FunFam" id="3.40.50.300:FF:000119">
    <property type="entry name" value="Sulfate adenylyltransferase subunit 1"/>
    <property type="match status" value="1"/>
</dbReference>
<dbReference type="Gene3D" id="3.40.50.300">
    <property type="entry name" value="P-loop containing nucleotide triphosphate hydrolases"/>
    <property type="match status" value="1"/>
</dbReference>
<dbReference type="Gene3D" id="2.40.30.10">
    <property type="entry name" value="Translation factors"/>
    <property type="match status" value="2"/>
</dbReference>
<dbReference type="HAMAP" id="MF_00062">
    <property type="entry name" value="Sulf_adenylyltr_sub1"/>
    <property type="match status" value="1"/>
</dbReference>
<dbReference type="InterPro" id="IPR041757">
    <property type="entry name" value="CysN_GTP-bd"/>
</dbReference>
<dbReference type="InterPro" id="IPR044138">
    <property type="entry name" value="CysN_II"/>
</dbReference>
<dbReference type="InterPro" id="IPR044139">
    <property type="entry name" value="CysN_NoDQ_III"/>
</dbReference>
<dbReference type="InterPro" id="IPR031157">
    <property type="entry name" value="G_TR_CS"/>
</dbReference>
<dbReference type="InterPro" id="IPR054696">
    <property type="entry name" value="GTP-eEF1A_C"/>
</dbReference>
<dbReference type="InterPro" id="IPR027417">
    <property type="entry name" value="P-loop_NTPase"/>
</dbReference>
<dbReference type="InterPro" id="IPR005225">
    <property type="entry name" value="Small_GTP-bd"/>
</dbReference>
<dbReference type="InterPro" id="IPR011779">
    <property type="entry name" value="SO4_adenylTrfase_lsu"/>
</dbReference>
<dbReference type="InterPro" id="IPR000795">
    <property type="entry name" value="T_Tr_GTP-bd_dom"/>
</dbReference>
<dbReference type="InterPro" id="IPR050100">
    <property type="entry name" value="TRAFAC_GTPase_members"/>
</dbReference>
<dbReference type="InterPro" id="IPR009000">
    <property type="entry name" value="Transl_B-barrel_sf"/>
</dbReference>
<dbReference type="InterPro" id="IPR009001">
    <property type="entry name" value="Transl_elong_EF1A/Init_IF2_C"/>
</dbReference>
<dbReference type="NCBIfam" id="TIGR02034">
    <property type="entry name" value="CysN"/>
    <property type="match status" value="1"/>
</dbReference>
<dbReference type="NCBIfam" id="NF003478">
    <property type="entry name" value="PRK05124.1"/>
    <property type="match status" value="1"/>
</dbReference>
<dbReference type="NCBIfam" id="TIGR00231">
    <property type="entry name" value="small_GTP"/>
    <property type="match status" value="1"/>
</dbReference>
<dbReference type="PANTHER" id="PTHR23115">
    <property type="entry name" value="TRANSLATION FACTOR"/>
    <property type="match status" value="1"/>
</dbReference>
<dbReference type="Pfam" id="PF22594">
    <property type="entry name" value="GTP-eEF1A_C"/>
    <property type="match status" value="1"/>
</dbReference>
<dbReference type="Pfam" id="PF00009">
    <property type="entry name" value="GTP_EFTU"/>
    <property type="match status" value="1"/>
</dbReference>
<dbReference type="PRINTS" id="PR00315">
    <property type="entry name" value="ELONGATNFCT"/>
</dbReference>
<dbReference type="SUPFAM" id="SSF50465">
    <property type="entry name" value="EF-Tu/eEF-1alpha/eIF2-gamma C-terminal domain"/>
    <property type="match status" value="1"/>
</dbReference>
<dbReference type="SUPFAM" id="SSF52540">
    <property type="entry name" value="P-loop containing nucleoside triphosphate hydrolases"/>
    <property type="match status" value="1"/>
</dbReference>
<dbReference type="SUPFAM" id="SSF50447">
    <property type="entry name" value="Translation proteins"/>
    <property type="match status" value="1"/>
</dbReference>
<dbReference type="PROSITE" id="PS00301">
    <property type="entry name" value="G_TR_1"/>
    <property type="match status" value="1"/>
</dbReference>
<dbReference type="PROSITE" id="PS51722">
    <property type="entry name" value="G_TR_2"/>
    <property type="match status" value="1"/>
</dbReference>
<reference key="1">
    <citation type="journal article" date="2001" name="Nature">
        <title>Complete genome sequence of Salmonella enterica serovar Typhimurium LT2.</title>
        <authorList>
            <person name="McClelland M."/>
            <person name="Sanderson K.E."/>
            <person name="Spieth J."/>
            <person name="Clifton S.W."/>
            <person name="Latreille P."/>
            <person name="Courtney L."/>
            <person name="Porwollik S."/>
            <person name="Ali J."/>
            <person name="Dante M."/>
            <person name="Du F."/>
            <person name="Hou S."/>
            <person name="Layman D."/>
            <person name="Leonard S."/>
            <person name="Nguyen C."/>
            <person name="Scott K."/>
            <person name="Holmes A."/>
            <person name="Grewal N."/>
            <person name="Mulvaney E."/>
            <person name="Ryan E."/>
            <person name="Sun H."/>
            <person name="Florea L."/>
            <person name="Miller W."/>
            <person name="Stoneking T."/>
            <person name="Nhan M."/>
            <person name="Waterston R."/>
            <person name="Wilson R.K."/>
        </authorList>
    </citation>
    <scope>NUCLEOTIDE SEQUENCE [LARGE SCALE GENOMIC DNA]</scope>
    <source>
        <strain>LT2 / SGSC1412 / ATCC 700720</strain>
    </source>
</reference>
<evidence type="ECO:0000250" key="1"/>
<evidence type="ECO:0000255" key="2">
    <source>
        <dbReference type="HAMAP-Rule" id="MF_00062"/>
    </source>
</evidence>
<evidence type="ECO:0000305" key="3"/>
<feature type="chain" id="PRO_0000091529" description="Sulfate adenylyltransferase subunit 1">
    <location>
        <begin position="1"/>
        <end position="479"/>
    </location>
</feature>
<feature type="domain" description="tr-type G">
    <location>
        <begin position="25"/>
        <end position="239"/>
    </location>
</feature>
<feature type="region of interest" description="G1" evidence="1">
    <location>
        <begin position="34"/>
        <end position="41"/>
    </location>
</feature>
<feature type="region of interest" description="G2" evidence="1">
    <location>
        <begin position="92"/>
        <end position="96"/>
    </location>
</feature>
<feature type="region of interest" description="G3" evidence="1">
    <location>
        <begin position="113"/>
        <end position="116"/>
    </location>
</feature>
<feature type="region of interest" description="G4" evidence="1">
    <location>
        <begin position="168"/>
        <end position="171"/>
    </location>
</feature>
<feature type="region of interest" description="G5" evidence="1">
    <location>
        <begin position="206"/>
        <end position="208"/>
    </location>
</feature>
<feature type="binding site" evidence="2">
    <location>
        <begin position="34"/>
        <end position="41"/>
    </location>
    <ligand>
        <name>GTP</name>
        <dbReference type="ChEBI" id="CHEBI:37565"/>
    </ligand>
</feature>
<feature type="binding site" evidence="2">
    <location>
        <begin position="113"/>
        <end position="117"/>
    </location>
    <ligand>
        <name>GTP</name>
        <dbReference type="ChEBI" id="CHEBI:37565"/>
    </ligand>
</feature>
<feature type="binding site" evidence="2">
    <location>
        <begin position="168"/>
        <end position="171"/>
    </location>
    <ligand>
        <name>GTP</name>
        <dbReference type="ChEBI" id="CHEBI:37565"/>
    </ligand>
</feature>
<keyword id="KW-0067">ATP-binding</keyword>
<keyword id="KW-0342">GTP-binding</keyword>
<keyword id="KW-0547">Nucleotide-binding</keyword>
<keyword id="KW-0548">Nucleotidyltransferase</keyword>
<keyword id="KW-1185">Reference proteome</keyword>
<keyword id="KW-0808">Transferase</keyword>
<accession>Q8ZMF5</accession>
<protein>
    <recommendedName>
        <fullName evidence="2">Sulfate adenylyltransferase subunit 1</fullName>
        <ecNumber evidence="2">2.7.7.4</ecNumber>
    </recommendedName>
    <alternativeName>
        <fullName evidence="2">ATP-sulfurylase large subunit</fullName>
    </alternativeName>
    <alternativeName>
        <fullName evidence="2">Sulfate adenylate transferase</fullName>
        <shortName evidence="2">SAT</shortName>
    </alternativeName>
</protein>
<name>CYSN_SALTY</name>
<sequence length="479" mass="53162">MNTILAQQIANEGGVEAWMIAQQHKSLLRFLTCGSVDDGKSTLIGRLLHDTLQIYEDQLSSLHNDSKRHGTQGEKLDLALLVDGLQAEREQGITIDVAYRYFSTERRKFIIADTPGHEQYTRNMATGASTCDLAILLIDARKGVLDQTRRHSFISTLLGIKHLVVAINKMDLVDYREETFARIREDYLTFAEQLPGDLDIRFVPLSALEGDNVAAQSANMRWYSGPTLLEVLETVDIQRAVDRQPMRFPVQYVNRPNLDFRGYAGTLASGSVKVGERIKVLPSGVESSVARIVTFDGDKEEACAGEAITLVLNDDIDISRGDLLLAANETLAPARHAAIDVVWMAEQPLAPGQSYDVKLAGKKTRARIEAIRYQIDINNLTQRDVESLPLNGIGLVEMTFDEPLALDIYQQNPVTGGLIFIDRLSNVTVGAGMVRELDERGATPPVEYSAFELELNALVRRHFPHWDARDLLGDKHGAA</sequence>
<proteinExistence type="inferred from homology"/>
<comment type="function">
    <text evidence="2">With CysD forms the ATP sulfurylase (ATPS) that catalyzes the adenylation of sulfate producing adenosine 5'-phosphosulfate (APS) and diphosphate, the first enzymatic step in sulfur assimilation pathway. APS synthesis involves the formation of a high-energy phosphoric-sulfuric acid anhydride bond driven by GTP hydrolysis by CysN coupled to ATP hydrolysis by CysD.</text>
</comment>
<comment type="catalytic activity">
    <reaction evidence="2">
        <text>sulfate + ATP + H(+) = adenosine 5'-phosphosulfate + diphosphate</text>
        <dbReference type="Rhea" id="RHEA:18133"/>
        <dbReference type="ChEBI" id="CHEBI:15378"/>
        <dbReference type="ChEBI" id="CHEBI:16189"/>
        <dbReference type="ChEBI" id="CHEBI:30616"/>
        <dbReference type="ChEBI" id="CHEBI:33019"/>
        <dbReference type="ChEBI" id="CHEBI:58243"/>
        <dbReference type="EC" id="2.7.7.4"/>
    </reaction>
</comment>
<comment type="pathway">
    <text evidence="2">Sulfur metabolism; hydrogen sulfide biosynthesis; sulfite from sulfate: step 1/3.</text>
</comment>
<comment type="subunit">
    <text evidence="2">Heterodimer composed of CysD, the smaller subunit, and CysN.</text>
</comment>
<comment type="similarity">
    <text evidence="2 3">Belongs to the TRAFAC class translation factor GTPase superfamily. Classic translation factor GTPase family. CysN/NodQ subfamily.</text>
</comment>
<gene>
    <name evidence="2" type="primary">cysN</name>
    <name type="ordered locus">STM2934</name>
</gene>